<keyword id="KW-0002">3D-structure</keyword>
<keyword id="KW-0024">Alternative initiation</keyword>
<keyword id="KW-0025">Alternative splicing</keyword>
<keyword id="KW-0175">Coiled coil</keyword>
<keyword id="KW-0488">Methylation</keyword>
<keyword id="KW-0597">Phosphoprotein</keyword>
<keyword id="KW-1267">Proteomics identification</keyword>
<keyword id="KW-1185">Reference proteome</keyword>
<keyword id="KW-0694">RNA-binding</keyword>
<keyword id="KW-0943">RNA-mediated gene silencing</keyword>
<keyword id="KW-0810">Translation regulation</keyword>
<gene>
    <name type="primary">TNRC6C</name>
    <name type="synonym">KIAA1582</name>
</gene>
<evidence type="ECO:0000250" key="1">
    <source>
        <dbReference type="UniProtKB" id="Q3UHC0"/>
    </source>
</evidence>
<evidence type="ECO:0000255" key="2"/>
<evidence type="ECO:0000255" key="3">
    <source>
        <dbReference type="PROSITE-ProRule" id="PRU00212"/>
    </source>
</evidence>
<evidence type="ECO:0000256" key="4">
    <source>
        <dbReference type="SAM" id="MobiDB-lite"/>
    </source>
</evidence>
<evidence type="ECO:0000269" key="5">
    <source>
    </source>
</evidence>
<evidence type="ECO:0000269" key="6">
    <source>
    </source>
</evidence>
<evidence type="ECO:0000269" key="7">
    <source>
    </source>
</evidence>
<evidence type="ECO:0000269" key="8">
    <source>
    </source>
</evidence>
<evidence type="ECO:0000269" key="9">
    <source>
    </source>
</evidence>
<evidence type="ECO:0000269" key="10">
    <source>
    </source>
</evidence>
<evidence type="ECO:0000305" key="11"/>
<evidence type="ECO:0007744" key="12">
    <source>
    </source>
</evidence>
<evidence type="ECO:0007744" key="13">
    <source>
    </source>
</evidence>
<evidence type="ECO:0007744" key="14">
    <source>
    </source>
</evidence>
<evidence type="ECO:0007744" key="15">
    <source>
    </source>
</evidence>
<evidence type="ECO:0007829" key="16">
    <source>
        <dbReference type="PDB" id="2DKL"/>
    </source>
</evidence>
<evidence type="ECO:0007829" key="17">
    <source>
        <dbReference type="PDB" id="7RUQ"/>
    </source>
</evidence>
<reference key="1">
    <citation type="journal article" date="2000" name="DNA Res.">
        <title>Prediction of the coding sequences of unidentified human genes. XVIII. The complete sequences of 100 new cDNA clones from brain which code for large proteins in vitro.</title>
        <authorList>
            <person name="Nagase T."/>
            <person name="Kikuno R."/>
            <person name="Nakayama M."/>
            <person name="Hirosawa M."/>
            <person name="Ohara O."/>
        </authorList>
    </citation>
    <scope>NUCLEOTIDE SEQUENCE [LARGE SCALE MRNA] (ISOFORM 1)</scope>
    <source>
        <tissue>Brain</tissue>
    </source>
</reference>
<reference key="2">
    <citation type="journal article" date="2002" name="DNA Res.">
        <title>Construction of expression-ready cDNA clones for KIAA genes: manual curation of 330 KIAA cDNA clones.</title>
        <authorList>
            <person name="Nakajima D."/>
            <person name="Okazaki N."/>
            <person name="Yamakawa H."/>
            <person name="Kikuno R."/>
            <person name="Ohara O."/>
            <person name="Nagase T."/>
        </authorList>
    </citation>
    <scope>SEQUENCE REVISION</scope>
</reference>
<reference key="3">
    <citation type="journal article" date="2006" name="Nature">
        <title>DNA sequence of human chromosome 17 and analysis of rearrangement in the human lineage.</title>
        <authorList>
            <person name="Zody M.C."/>
            <person name="Garber M."/>
            <person name="Adams D.J."/>
            <person name="Sharpe T."/>
            <person name="Harrow J."/>
            <person name="Lupski J.R."/>
            <person name="Nicholson C."/>
            <person name="Searle S.M."/>
            <person name="Wilming L."/>
            <person name="Young S.K."/>
            <person name="Abouelleil A."/>
            <person name="Allen N.R."/>
            <person name="Bi W."/>
            <person name="Bloom T."/>
            <person name="Borowsky M.L."/>
            <person name="Bugalter B.E."/>
            <person name="Butler J."/>
            <person name="Chang J.L."/>
            <person name="Chen C.-K."/>
            <person name="Cook A."/>
            <person name="Corum B."/>
            <person name="Cuomo C.A."/>
            <person name="de Jong P.J."/>
            <person name="DeCaprio D."/>
            <person name="Dewar K."/>
            <person name="FitzGerald M."/>
            <person name="Gilbert J."/>
            <person name="Gibson R."/>
            <person name="Gnerre S."/>
            <person name="Goldstein S."/>
            <person name="Grafham D.V."/>
            <person name="Grocock R."/>
            <person name="Hafez N."/>
            <person name="Hagopian D.S."/>
            <person name="Hart E."/>
            <person name="Norman C.H."/>
            <person name="Humphray S."/>
            <person name="Jaffe D.B."/>
            <person name="Jones M."/>
            <person name="Kamal M."/>
            <person name="Khodiyar V.K."/>
            <person name="LaButti K."/>
            <person name="Laird G."/>
            <person name="Lehoczky J."/>
            <person name="Liu X."/>
            <person name="Lokyitsang T."/>
            <person name="Loveland J."/>
            <person name="Lui A."/>
            <person name="Macdonald P."/>
            <person name="Major J.E."/>
            <person name="Matthews L."/>
            <person name="Mauceli E."/>
            <person name="McCarroll S.A."/>
            <person name="Mihalev A.H."/>
            <person name="Mudge J."/>
            <person name="Nguyen C."/>
            <person name="Nicol R."/>
            <person name="O'Leary S.B."/>
            <person name="Osoegawa K."/>
            <person name="Schwartz D.C."/>
            <person name="Shaw-Smith C."/>
            <person name="Stankiewicz P."/>
            <person name="Steward C."/>
            <person name="Swarbreck D."/>
            <person name="Venkataraman V."/>
            <person name="Whittaker C.A."/>
            <person name="Yang X."/>
            <person name="Zimmer A.R."/>
            <person name="Bradley A."/>
            <person name="Hubbard T."/>
            <person name="Birren B.W."/>
            <person name="Rogers J."/>
            <person name="Lander E.S."/>
            <person name="Nusbaum C."/>
        </authorList>
    </citation>
    <scope>NUCLEOTIDE SEQUENCE [LARGE SCALE GENOMIC DNA]</scope>
    <scope>ALTERNATIVE SPLICING (ISOFORMS 3 AND 4)</scope>
</reference>
<reference key="4">
    <citation type="submission" date="2005-06" db="EMBL/GenBank/DDBJ databases">
        <authorList>
            <person name="Mural R.J."/>
            <person name="Istrail S."/>
            <person name="Sutton G.G."/>
            <person name="Florea L."/>
            <person name="Halpern A.L."/>
            <person name="Mobarry C.M."/>
            <person name="Lippert R."/>
            <person name="Walenz B."/>
            <person name="Shatkay H."/>
            <person name="Dew I."/>
            <person name="Miller J.R."/>
            <person name="Flanigan M.J."/>
            <person name="Edwards N.J."/>
            <person name="Bolanos R."/>
            <person name="Fasulo D."/>
            <person name="Halldorsson B.V."/>
            <person name="Hannenhalli S."/>
            <person name="Turner R."/>
            <person name="Yooseph S."/>
            <person name="Lu F."/>
            <person name="Nusskern D.R."/>
            <person name="Shue B.C."/>
            <person name="Zheng X.H."/>
            <person name="Zhong F."/>
            <person name="Delcher A.L."/>
            <person name="Huson D.H."/>
            <person name="Kravitz S.A."/>
            <person name="Mouchard L."/>
            <person name="Reinert K."/>
            <person name="Remington K.A."/>
            <person name="Clark A.G."/>
            <person name="Waterman M.S."/>
            <person name="Eichler E.E."/>
            <person name="Adams M.D."/>
            <person name="Hunkapiller M.W."/>
            <person name="Myers E.W."/>
            <person name="Venter J.C."/>
        </authorList>
    </citation>
    <scope>NUCLEOTIDE SEQUENCE [LARGE SCALE GENOMIC DNA] (ISOFORM 1)</scope>
</reference>
<reference key="5">
    <citation type="journal article" date="2007" name="BMC Genomics">
        <title>The full-ORF clone resource of the German cDNA consortium.</title>
        <authorList>
            <person name="Bechtel S."/>
            <person name="Rosenfelder H."/>
            <person name="Duda A."/>
            <person name="Schmidt C.P."/>
            <person name="Ernst U."/>
            <person name="Wellenreuther R."/>
            <person name="Mehrle A."/>
            <person name="Schuster C."/>
            <person name="Bahr A."/>
            <person name="Bloecker H."/>
            <person name="Heubner D."/>
            <person name="Hoerlein A."/>
            <person name="Michel G."/>
            <person name="Wedler H."/>
            <person name="Koehrer K."/>
            <person name="Ottenwaelder B."/>
            <person name="Poustka A."/>
            <person name="Wiemann S."/>
            <person name="Schupp I."/>
        </authorList>
    </citation>
    <scope>NUCLEOTIDE SEQUENCE [LARGE SCALE MRNA] OF 837-1936 (ISOFORM 1)</scope>
    <source>
        <tissue>Melanoma</tissue>
    </source>
</reference>
<reference key="6">
    <citation type="journal article" date="2004" name="Genome Res.">
        <title>The status, quality, and expansion of the NIH full-length cDNA project: the Mammalian Gene Collection (MGC).</title>
        <authorList>
            <consortium name="The MGC Project Team"/>
        </authorList>
    </citation>
    <scope>NUCLEOTIDE SEQUENCE [LARGE SCALE MRNA] (ISOFORM 2)</scope>
    <source>
        <tissue>Brain</tissue>
    </source>
</reference>
<reference key="7">
    <citation type="journal article" date="2004" name="Nat. Genet.">
        <title>Complete sequencing and characterization of 21,243 full-length human cDNAs.</title>
        <authorList>
            <person name="Ota T."/>
            <person name="Suzuki Y."/>
            <person name="Nishikawa T."/>
            <person name="Otsuki T."/>
            <person name="Sugiyama T."/>
            <person name="Irie R."/>
            <person name="Wakamatsu A."/>
            <person name="Hayashi K."/>
            <person name="Sato H."/>
            <person name="Nagai K."/>
            <person name="Kimura K."/>
            <person name="Makita H."/>
            <person name="Sekine M."/>
            <person name="Obayashi M."/>
            <person name="Nishi T."/>
            <person name="Shibahara T."/>
            <person name="Tanaka T."/>
            <person name="Ishii S."/>
            <person name="Yamamoto J."/>
            <person name="Saito K."/>
            <person name="Kawai Y."/>
            <person name="Isono Y."/>
            <person name="Nakamura Y."/>
            <person name="Nagahari K."/>
            <person name="Murakami K."/>
            <person name="Yasuda T."/>
            <person name="Iwayanagi T."/>
            <person name="Wagatsuma M."/>
            <person name="Shiratori A."/>
            <person name="Sudo H."/>
            <person name="Hosoiri T."/>
            <person name="Kaku Y."/>
            <person name="Kodaira H."/>
            <person name="Kondo H."/>
            <person name="Sugawara M."/>
            <person name="Takahashi M."/>
            <person name="Kanda K."/>
            <person name="Yokoi T."/>
            <person name="Furuya T."/>
            <person name="Kikkawa E."/>
            <person name="Omura Y."/>
            <person name="Abe K."/>
            <person name="Kamihara K."/>
            <person name="Katsuta N."/>
            <person name="Sato K."/>
            <person name="Tanikawa M."/>
            <person name="Yamazaki M."/>
            <person name="Ninomiya K."/>
            <person name="Ishibashi T."/>
            <person name="Yamashita H."/>
            <person name="Murakawa K."/>
            <person name="Fujimori K."/>
            <person name="Tanai H."/>
            <person name="Kimata M."/>
            <person name="Watanabe M."/>
            <person name="Hiraoka S."/>
            <person name="Chiba Y."/>
            <person name="Ishida S."/>
            <person name="Ono Y."/>
            <person name="Takiguchi S."/>
            <person name="Watanabe S."/>
            <person name="Yosida M."/>
            <person name="Hotuta T."/>
            <person name="Kusano J."/>
            <person name="Kanehori K."/>
            <person name="Takahashi-Fujii A."/>
            <person name="Hara H."/>
            <person name="Tanase T.-O."/>
            <person name="Nomura Y."/>
            <person name="Togiya S."/>
            <person name="Komai F."/>
            <person name="Hara R."/>
            <person name="Takeuchi K."/>
            <person name="Arita M."/>
            <person name="Imose N."/>
            <person name="Musashino K."/>
            <person name="Yuuki H."/>
            <person name="Oshima A."/>
            <person name="Sasaki N."/>
            <person name="Aotsuka S."/>
            <person name="Yoshikawa Y."/>
            <person name="Matsunawa H."/>
            <person name="Ichihara T."/>
            <person name="Shiohata N."/>
            <person name="Sano S."/>
            <person name="Moriya S."/>
            <person name="Momiyama H."/>
            <person name="Satoh N."/>
            <person name="Takami S."/>
            <person name="Terashima Y."/>
            <person name="Suzuki O."/>
            <person name="Nakagawa S."/>
            <person name="Senoh A."/>
            <person name="Mizoguchi H."/>
            <person name="Goto Y."/>
            <person name="Shimizu F."/>
            <person name="Wakebe H."/>
            <person name="Hishigaki H."/>
            <person name="Watanabe T."/>
            <person name="Sugiyama A."/>
            <person name="Takemoto M."/>
            <person name="Kawakami B."/>
            <person name="Yamazaki M."/>
            <person name="Watanabe K."/>
            <person name="Kumagai A."/>
            <person name="Itakura S."/>
            <person name="Fukuzumi Y."/>
            <person name="Fujimori Y."/>
            <person name="Komiyama M."/>
            <person name="Tashiro H."/>
            <person name="Tanigami A."/>
            <person name="Fujiwara T."/>
            <person name="Ono T."/>
            <person name="Yamada K."/>
            <person name="Fujii Y."/>
            <person name="Ozaki K."/>
            <person name="Hirao M."/>
            <person name="Ohmori Y."/>
            <person name="Kawabata A."/>
            <person name="Hikiji T."/>
            <person name="Kobatake N."/>
            <person name="Inagaki H."/>
            <person name="Ikema Y."/>
            <person name="Okamoto S."/>
            <person name="Okitani R."/>
            <person name="Kawakami T."/>
            <person name="Noguchi S."/>
            <person name="Itoh T."/>
            <person name="Shigeta K."/>
            <person name="Senba T."/>
            <person name="Matsumura K."/>
            <person name="Nakajima Y."/>
            <person name="Mizuno T."/>
            <person name="Morinaga M."/>
            <person name="Sasaki M."/>
            <person name="Togashi T."/>
            <person name="Oyama M."/>
            <person name="Hata H."/>
            <person name="Watanabe M."/>
            <person name="Komatsu T."/>
            <person name="Mizushima-Sugano J."/>
            <person name="Satoh T."/>
            <person name="Shirai Y."/>
            <person name="Takahashi Y."/>
            <person name="Nakagawa K."/>
            <person name="Okumura K."/>
            <person name="Nagase T."/>
            <person name="Nomura N."/>
            <person name="Kikuchi H."/>
            <person name="Masuho Y."/>
            <person name="Yamashita R."/>
            <person name="Nakai K."/>
            <person name="Yada T."/>
            <person name="Nakamura Y."/>
            <person name="Ohara O."/>
            <person name="Isogai T."/>
            <person name="Sugano S."/>
        </authorList>
    </citation>
    <scope>NUCLEOTIDE SEQUENCE [LARGE SCALE MRNA] (ISOFORM 2)</scope>
</reference>
<reference key="8">
    <citation type="journal article" date="2009" name="Mol. Cell">
        <title>Mammalian miRNA RISC recruits CAF1 and PABP to affect PABP-dependent deadenylation.</title>
        <authorList>
            <person name="Fabian M.R."/>
            <person name="Mathonnet G."/>
            <person name="Sundermeier T."/>
            <person name="Mathys H."/>
            <person name="Zipprich J.T."/>
            <person name="Svitkin Y.V."/>
            <person name="Rivas F."/>
            <person name="Jinek M."/>
            <person name="Wohlschlegel J."/>
            <person name="Doudna J.A."/>
            <person name="Chen C.Y."/>
            <person name="Shyu A.B."/>
            <person name="Yates J.R. III"/>
            <person name="Hannon G.J."/>
            <person name="Filipowicz W."/>
            <person name="Duchaine T.F."/>
            <person name="Sonenberg N."/>
        </authorList>
    </citation>
    <scope>INTERACTION WITH PABPC1 AND EIF4G1</scope>
</reference>
<reference key="9">
    <citation type="journal article" date="2009" name="RNA">
        <title>Importance of the C-terminal domain of the human GW182 protein TNRC6C for translational repression.</title>
        <authorList>
            <person name="Zipprich J.T."/>
            <person name="Bhattacharyya S."/>
            <person name="Mathys H."/>
            <person name="Filipowicz W."/>
        </authorList>
    </citation>
    <scope>FUNCTION</scope>
    <scope>INTERACTION WITH ARGONAUTE PROTEINS</scope>
    <scope>MUTAGENESIS OF HIS-1783; PHE-1789 AND TYR-1802</scope>
</reference>
<reference key="10">
    <citation type="journal article" date="2009" name="RNA">
        <title>The C-terminal domains of human TNRC6A, TNRC6B, and TNRC6C silence bound transcripts independently of Argonaute proteins.</title>
        <authorList>
            <person name="Lazzaretti D."/>
            <person name="Tournier I."/>
            <person name="Izaurralde E."/>
        </authorList>
    </citation>
    <scope>INTERACTION WITH AGO1; AGO2; AGO3 AND AGO4</scope>
</reference>
<reference key="11">
    <citation type="journal article" date="2009" name="Sci. Signal.">
        <title>Quantitative phosphoproteomic analysis of T cell receptor signaling reveals system-wide modulation of protein-protein interactions.</title>
        <authorList>
            <person name="Mayya V."/>
            <person name="Lundgren D.H."/>
            <person name="Hwang S.-I."/>
            <person name="Rezaul K."/>
            <person name="Wu L."/>
            <person name="Eng J.K."/>
            <person name="Rodionov V."/>
            <person name="Han D.K."/>
        </authorList>
    </citation>
    <scope>PHOSPHORYLATION [LARGE SCALE ANALYSIS] AT SER-924</scope>
    <scope>IDENTIFICATION BY MASS SPECTROMETRY [LARGE SCALE ANALYSIS]</scope>
    <source>
        <tissue>Leukemic T-cell</tissue>
    </source>
</reference>
<reference key="12">
    <citation type="journal article" date="2011" name="Mol. Cell">
        <title>GW182 proteins directly recruit cytoplasmic deadenylase complexes to miRNA targets.</title>
        <authorList>
            <person name="Braun J.E."/>
            <person name="Huntzinger E."/>
            <person name="Fauser M."/>
            <person name="Izaurralde E."/>
        </authorList>
    </citation>
    <scope>FUNCTION</scope>
    <scope>INTERACTION WITH CNOT1 AND PAN3</scope>
</reference>
<reference key="13">
    <citation type="journal article" date="2011" name="Nat. Struct. Mol. Biol.">
        <title>miRNA-mediated deadenylation is orchestrated by GW182 through two conserved motifs that interact with CCR4-NOT.</title>
        <authorList>
            <person name="Fabian M.R."/>
            <person name="Cieplak M.K."/>
            <person name="Frank F."/>
            <person name="Morita M."/>
            <person name="Green J."/>
            <person name="Srikumar T."/>
            <person name="Nagar B."/>
            <person name="Yamamoto T."/>
            <person name="Raught B."/>
            <person name="Duchaine T.F."/>
            <person name="Sonenberg N."/>
        </authorList>
    </citation>
    <scope>FUNCTION</scope>
    <scope>INTERACTION WITH CNOT1</scope>
    <scope>MUTAGENESIS OF 1501-GLN--TRP-1507; 1595-GLU-PHE-1596; 1602-TRP-LYS-1603; 1893-LEU--GLY-1695 AND 1904-LEU--GLY-1906</scope>
</reference>
<reference key="14">
    <citation type="journal article" date="2011" name="Nat. Struct. Mol. Biol.">
        <title>miRNA repression involves GW182-mediated recruitment of CCR4-NOT through conserved W-containing motifs.</title>
        <authorList>
            <person name="Chekulaeva M."/>
            <person name="Mathys H."/>
            <person name="Zipprich J.T."/>
            <person name="Attig J."/>
            <person name="Colic M."/>
            <person name="Parker R."/>
            <person name="Filipowicz W."/>
        </authorList>
    </citation>
    <scope>FUNCTION</scope>
    <scope>INTERACTION WITH PABPC1 AND THE CCR4-NOT COMPLEX</scope>
    <scope>MUTAGENESIS OF TRP-1691; TRP-1733; TRP-1740; TRP-1750; TRP-1761; TRP-1851 AND TRP-1894</scope>
</reference>
<reference key="15">
    <citation type="journal article" date="2013" name="J. Proteome Res.">
        <title>Toward a comprehensive characterization of a human cancer cell phosphoproteome.</title>
        <authorList>
            <person name="Zhou H."/>
            <person name="Di Palma S."/>
            <person name="Preisinger C."/>
            <person name="Peng M."/>
            <person name="Polat A.N."/>
            <person name="Heck A.J."/>
            <person name="Mohammed S."/>
        </authorList>
    </citation>
    <scope>PHOSPHORYLATION [LARGE SCALE ANALYSIS] AT SER-924 AND SER-1218</scope>
    <scope>IDENTIFICATION BY MASS SPECTROMETRY [LARGE SCALE ANALYSIS]</scope>
    <source>
        <tissue>Cervix carcinoma</tissue>
        <tissue>Erythroleukemia</tissue>
    </source>
</reference>
<reference key="16">
    <citation type="journal article" date="2014" name="J. Proteomics">
        <title>An enzyme assisted RP-RPLC approach for in-depth analysis of human liver phosphoproteome.</title>
        <authorList>
            <person name="Bian Y."/>
            <person name="Song C."/>
            <person name="Cheng K."/>
            <person name="Dong M."/>
            <person name="Wang F."/>
            <person name="Huang J."/>
            <person name="Sun D."/>
            <person name="Wang L."/>
            <person name="Ye M."/>
            <person name="Zou H."/>
        </authorList>
    </citation>
    <scope>PHOSPHORYLATION [LARGE SCALE ANALYSIS] AT THR-987</scope>
    <scope>IDENTIFICATION BY MASS SPECTROMETRY [LARGE SCALE ANALYSIS]</scope>
    <source>
        <tissue>Liver</tissue>
    </source>
</reference>
<reference key="17">
    <citation type="journal article" date="2014" name="Mol. Cell. Proteomics">
        <title>Immunoaffinity enrichment and mass spectrometry analysis of protein methylation.</title>
        <authorList>
            <person name="Guo A."/>
            <person name="Gu H."/>
            <person name="Zhou J."/>
            <person name="Mulhern D."/>
            <person name="Wang Y."/>
            <person name="Lee K.A."/>
            <person name="Yang V."/>
            <person name="Aguiar M."/>
            <person name="Kornhauser J."/>
            <person name="Jia X."/>
            <person name="Ren J."/>
            <person name="Beausoleil S.A."/>
            <person name="Silva J.C."/>
            <person name="Vemulapalli V."/>
            <person name="Bedford M.T."/>
            <person name="Comb M.J."/>
        </authorList>
    </citation>
    <scope>METHYLATION [LARGE SCALE ANALYSIS] AT ARG-523</scope>
    <scope>IDENTIFICATION BY MASS SPECTROMETRY [LARGE SCALE ANALYSIS]</scope>
    <source>
        <tissue>Colon carcinoma</tissue>
    </source>
</reference>
<reference key="18">
    <citation type="submission" date="2006-10" db="PDB data bank">
        <title>Solution structure of the UBA domain in the human trinucleotide repeat containing 6C protein (HTNRC6C).</title>
        <authorList>
            <consortium name="RIKEN structural genomics initiative (RSGI)"/>
        </authorList>
    </citation>
    <scope>STRUCTURE BY NMR OF 1134-1205</scope>
</reference>
<protein>
    <recommendedName>
        <fullName>Trinucleotide repeat-containing gene 6C protein</fullName>
    </recommendedName>
</protein>
<sequence length="1936" mass="201830">MEEKKKKKQEEKKKKEGAQKKAADQKTKVPEPTKTCSSQPQPAGTSTSTSTSTISSSNNGKRASASGQQPAASRYLPREVPPRFRQQEQKQLLKRGQPLPTGTLTSVSPTQGAGPAGVSPPPLPGAGTQHHPSKLQPDLSHSGLADHYENSHWGQQPTYRSEANCSWDKVIIDRTDKEAWPSITGTETESASECTTDTDSASNCGSENSSMATGSAQGNFTGHTKKTNGNNGTNGALVQSPSNQSALGAGGANSNGSAARVWGVATGSSSGLAHCSVSGGDGKMDTMIGDGRSQNCWGASNSNAGINLNLNPNANPAAWPVLGHEGTVATGNPSSICSPVSAIGQNMGNQNGNPTGTLGAWGNLLPQESTEPQTSTSQNVSFSAQPQNLNTDGPNNTNPMNSSPNPINAMQTNGLPNWGMAVGMGAIIPPHLQGLPGANGSSVSQVSGGSAEGISNSVWGLSPGNPATGNSNSGFSQGNGDTVNSALSAKQNGSSSAVQKEGSGGNAWDSGPPAGPGILAWGRGSGNNGVGNIHSGAWGHPSRSTSNGVNGEWGKPPNQHSNSDINGKGSTGWESPSVTSQNPTVQPGGEHMNSWAKAASSGTTASEGSSDGSGNHNEGSTGREGTGEGRRRDKGIIDQGHIQLPRNDLDPRVLSNTGWGQTPVKQNTAWEFEESPRSERKNDNGTEAWGCAATQASNSGGKNDGSIMNSTNTSSVSGWVNAPPAAVPANTGWGDSNNKAPSGPGVWGDSISSTAVSTAAAAKSGHAWSGAANQEDKSPTWGEPPKPKSQHWGDGQRSNPAWSAGGGDWADSSSVLGHLGDGKKNGSGWDADSNRSGSGWNDTTRSGNSGWGNSTNTKANPGTNWGETLKPGPQQNWASKPQDNNVSNWGGAASVKQTGTGWIGGPVPVKQKDSSEATGWEEPSPPSIRRKMEIDDGTSAWGDPSNYNNKTVNMWDRNNPVIQSSTTTNTTTTTTTTTSNTTHRVETPPPHQAGTQLNRSPLLGPVSSGWGEMPNVHSKTENSWGEPSSPSTLVDNGTAAWGKPPSSGSGWGDHPAEPPVAFGRAGAPVAASALCKPASKSMQEGWGSGGDEMNLSTSQWEDEEGDVWNNAASQESTSSCSSWGNAPKKGLQKGMKTSGKQDEAWIMSRLIKQLTDMGFPREPAEEALKSNNMNLDQAMSALLEKKVDVDKRGLGVTDHNGMAAKPLGCRPPISKESSVDRPTFLDKDGGLVEEPTPSPFLPSPSLKLPLSHSALPSQALGGIASGLGMQNLNSSRQIPSGNLGMFGNSGAAQARTMQQPPQPPVQPLNSSQPSLRAQVPQFLSPQVQAQLLQFAAKNIGLNPALLTSPINPQHMTMLNQLYQLQLAYQRLQIQQQMLQAQRNVSGSMRQQEQQVARTITNLQQQIQQHQRQLAQALLVKQPPPPPPPPHLSLHPSAGKSAMDSFPSHPQTPGLPDLQTKEQQSSPNTFAPYPLAGLNPNMNVNSMDMTGGLSVKDPSQSQSRLPQWTHPNSMDNLPSAASPLEQNPSKHGAIPGGLSIGPPGKSSIDDSYGRYDLIQNSESPASPPVAVPHSWSRAKSDSDKISNGSSINWPPEFHPGVPWKGLQNIDPENDPDVTPGSVPTGPTINTTIQDVNRYLLKSGGSSPPSSQNATLPSSSAWPLSASGYSSSFSSIASAPSVAGKLSDIKSTWSSGPTSHTQASLSHELWKVPRNSTAPTRPPPGLTNPKPSSTWGASPLGWTSSYSSGSAWSTDTSGRTSSWLVLRNLTPQIDGSTLRTLCLQHGPLITFHLNLTQGNAVVRYSSKEEAAKAQKSLHMCVLGNTTILAEFAGEEEVNRFLAQGQALPPTSSWQSSSASSQPRLSAAGSSHGLVRSDAGHWNAPCLGGKGSSELLWGGVPQYSSSLWGPPSADDSRVIGSPTPLTTLLPGDLLSGESL</sequence>
<dbReference type="EMBL" id="AB046802">
    <property type="protein sequence ID" value="BAB13408.2"/>
    <property type="status" value="ALT_INIT"/>
    <property type="molecule type" value="mRNA"/>
</dbReference>
<dbReference type="EMBL" id="AC021593">
    <property type="status" value="NOT_ANNOTATED_CDS"/>
    <property type="molecule type" value="Genomic_DNA"/>
</dbReference>
<dbReference type="EMBL" id="AC015804">
    <property type="status" value="NOT_ANNOTATED_CDS"/>
    <property type="molecule type" value="Genomic_DNA"/>
</dbReference>
<dbReference type="EMBL" id="KF511238">
    <property type="status" value="NOT_ANNOTATED_CDS"/>
    <property type="molecule type" value="Genomic_DNA"/>
</dbReference>
<dbReference type="EMBL" id="CH471099">
    <property type="protein sequence ID" value="EAW89480.1"/>
    <property type="molecule type" value="Genomic_DNA"/>
</dbReference>
<dbReference type="EMBL" id="AL834429">
    <property type="protein sequence ID" value="CAD39090.1"/>
    <property type="status" value="ALT_INIT"/>
    <property type="molecule type" value="mRNA"/>
</dbReference>
<dbReference type="EMBL" id="BC045631">
    <property type="protein sequence ID" value="AAH45631.1"/>
    <property type="status" value="ALT_INIT"/>
    <property type="molecule type" value="mRNA"/>
</dbReference>
<dbReference type="EMBL" id="AK056421">
    <property type="protein sequence ID" value="BAB71179.1"/>
    <property type="status" value="ALT_INIT"/>
    <property type="molecule type" value="mRNA"/>
</dbReference>
<dbReference type="CCDS" id="CCDS45799.1">
    <molecule id="Q9HCJ0-2"/>
</dbReference>
<dbReference type="CCDS" id="CCDS92403.1">
    <molecule id="Q9HCJ0-4"/>
</dbReference>
<dbReference type="RefSeq" id="NP_001136112.2">
    <molecule id="Q9HCJ0-3"/>
    <property type="nucleotide sequence ID" value="NM_001142640.2"/>
</dbReference>
<dbReference type="RefSeq" id="NP_001382437.1">
    <molecule id="Q9HCJ0-2"/>
    <property type="nucleotide sequence ID" value="NM_001395508.1"/>
</dbReference>
<dbReference type="RefSeq" id="NP_001382439.1">
    <molecule id="Q9HCJ0-4"/>
    <property type="nucleotide sequence ID" value="NM_001395510.1"/>
</dbReference>
<dbReference type="RefSeq" id="NP_061869.2">
    <molecule id="Q9HCJ0-1"/>
    <property type="nucleotide sequence ID" value="NM_018996.3"/>
</dbReference>
<dbReference type="PDB" id="2DKL">
    <property type="method" value="NMR"/>
    <property type="chains" value="A=1134-1205"/>
</dbReference>
<dbReference type="PDB" id="2X04">
    <property type="method" value="X-ray"/>
    <property type="resolution" value="1.49 A"/>
    <property type="chains" value="C/D=1589-1606"/>
</dbReference>
<dbReference type="PDB" id="3KTP">
    <property type="method" value="X-ray"/>
    <property type="resolution" value="1.50 A"/>
    <property type="chains" value="B=1587-1608"/>
</dbReference>
<dbReference type="PDB" id="7RUQ">
    <property type="method" value="X-ray"/>
    <property type="resolution" value="1.79 A"/>
    <property type="chains" value="B/D=1716-1726"/>
</dbReference>
<dbReference type="PDBsum" id="2DKL"/>
<dbReference type="PDBsum" id="2X04"/>
<dbReference type="PDBsum" id="3KTP"/>
<dbReference type="PDBsum" id="7RUQ"/>
<dbReference type="SMR" id="Q9HCJ0"/>
<dbReference type="BioGRID" id="121716">
    <property type="interactions" value="140"/>
</dbReference>
<dbReference type="ComplexPortal" id="CPX-8625">
    <molecule id="Q9HCJ0-1"/>
    <property type="entry name" value="miRNA RISC complex, TNRC6C variant"/>
</dbReference>
<dbReference type="DIP" id="DIP-48569N"/>
<dbReference type="ELM" id="Q9HCJ0"/>
<dbReference type="FunCoup" id="Q9HCJ0">
    <property type="interactions" value="2720"/>
</dbReference>
<dbReference type="IntAct" id="Q9HCJ0">
    <property type="interactions" value="53"/>
</dbReference>
<dbReference type="MINT" id="Q9HCJ0"/>
<dbReference type="STRING" id="9606.ENSP00000336783"/>
<dbReference type="GlyCosmos" id="Q9HCJ0">
    <property type="glycosylation" value="11 sites, 2 glycans"/>
</dbReference>
<dbReference type="GlyGen" id="Q9HCJ0">
    <property type="glycosylation" value="3 sites, 1 N-linked glycan (1 site)"/>
</dbReference>
<dbReference type="iPTMnet" id="Q9HCJ0"/>
<dbReference type="PhosphoSitePlus" id="Q9HCJ0"/>
<dbReference type="BioMuta" id="TNRC6C"/>
<dbReference type="DMDM" id="126253813"/>
<dbReference type="jPOST" id="Q9HCJ0"/>
<dbReference type="MassIVE" id="Q9HCJ0"/>
<dbReference type="PaxDb" id="9606-ENSP00000336783"/>
<dbReference type="PeptideAtlas" id="Q9HCJ0"/>
<dbReference type="ProteomicsDB" id="33705"/>
<dbReference type="ProteomicsDB" id="81734">
    <molecule id="Q9HCJ0-1"/>
</dbReference>
<dbReference type="ProteomicsDB" id="81735">
    <molecule id="Q9HCJ0-2"/>
</dbReference>
<dbReference type="Pumba" id="Q9HCJ0"/>
<dbReference type="Antibodypedia" id="32505">
    <property type="antibodies" value="58 antibodies from 13 providers"/>
</dbReference>
<dbReference type="DNASU" id="57690"/>
<dbReference type="Ensembl" id="ENST00000696270.1">
    <molecule id="Q9HCJ0-3"/>
    <property type="protein sequence ID" value="ENSP00000512514.1"/>
    <property type="gene ID" value="ENSG00000078687.18"/>
</dbReference>
<dbReference type="Ensembl" id="ENST00000696541.1">
    <molecule id="Q9HCJ0-4"/>
    <property type="protein sequence ID" value="ENSP00000512702.1"/>
    <property type="gene ID" value="ENSG00000078687.18"/>
</dbReference>
<dbReference type="GeneID" id="57690"/>
<dbReference type="KEGG" id="hsa:57690"/>
<dbReference type="MANE-Select" id="ENST00000696270.1">
    <property type="protein sequence ID" value="ENSP00000512514.1"/>
    <property type="RefSeq nucleotide sequence ID" value="NM_001142640.2"/>
    <property type="RefSeq protein sequence ID" value="NP_001136112.2"/>
</dbReference>
<dbReference type="UCSC" id="uc002juc.3">
    <molecule id="Q9HCJ0-3"/>
    <property type="organism name" value="human"/>
</dbReference>
<dbReference type="AGR" id="HGNC:29318"/>
<dbReference type="CTD" id="57690"/>
<dbReference type="DisGeNET" id="57690"/>
<dbReference type="GeneCards" id="TNRC6C"/>
<dbReference type="HGNC" id="HGNC:29318">
    <property type="gene designation" value="TNRC6C"/>
</dbReference>
<dbReference type="HPA" id="ENSG00000078687">
    <property type="expression patterns" value="Tissue enhanced (retina)"/>
</dbReference>
<dbReference type="MIM" id="610741">
    <property type="type" value="gene"/>
</dbReference>
<dbReference type="neXtProt" id="NX_Q9HCJ0"/>
<dbReference type="OpenTargets" id="ENSG00000078687"/>
<dbReference type="PharmGKB" id="PA134880671"/>
<dbReference type="VEuPathDB" id="HostDB:ENSG00000078687"/>
<dbReference type="eggNOG" id="ENOG502QWFQ">
    <property type="taxonomic scope" value="Eukaryota"/>
</dbReference>
<dbReference type="GeneTree" id="ENSGT00940000157598"/>
<dbReference type="HOGENOM" id="CLU_001298_3_0_1"/>
<dbReference type="InParanoid" id="Q9HCJ0"/>
<dbReference type="OrthoDB" id="5919166at2759"/>
<dbReference type="PAN-GO" id="Q9HCJ0">
    <property type="GO annotations" value="4 GO annotations based on evolutionary models"/>
</dbReference>
<dbReference type="PhylomeDB" id="Q9HCJ0"/>
<dbReference type="TreeFam" id="TF329702"/>
<dbReference type="PathwayCommons" id="Q9HCJ0"/>
<dbReference type="Reactome" id="R-HSA-1912408">
    <property type="pathway name" value="Pre-NOTCH Transcription and Translation"/>
</dbReference>
<dbReference type="Reactome" id="R-HSA-2559580">
    <property type="pathway name" value="Oxidative Stress Induced Senescence"/>
</dbReference>
<dbReference type="Reactome" id="R-HSA-2559585">
    <property type="pathway name" value="Oncogene Induced Senescence"/>
</dbReference>
<dbReference type="Reactome" id="R-HSA-4086398">
    <property type="pathway name" value="Ca2+ pathway"/>
</dbReference>
<dbReference type="Reactome" id="R-HSA-426496">
    <property type="pathway name" value="Post-transcriptional silencing by small RNAs"/>
</dbReference>
<dbReference type="Reactome" id="R-HSA-5628897">
    <property type="pathway name" value="TP53 Regulates Metabolic Genes"/>
</dbReference>
<dbReference type="Reactome" id="R-HSA-5687128">
    <property type="pathway name" value="MAPK6/MAPK4 signaling"/>
</dbReference>
<dbReference type="Reactome" id="R-HSA-8853884">
    <property type="pathway name" value="Transcriptional Regulation by VENTX"/>
</dbReference>
<dbReference type="Reactome" id="R-HSA-8934593">
    <property type="pathway name" value="Regulation of RUNX1 Expression and Activity"/>
</dbReference>
<dbReference type="Reactome" id="R-HSA-8936459">
    <property type="pathway name" value="RUNX1 regulates genes involved in megakaryocyte differentiation and platelet function"/>
</dbReference>
<dbReference type="Reactome" id="R-HSA-8943723">
    <property type="pathway name" value="Regulation of PTEN mRNA translation"/>
</dbReference>
<dbReference type="Reactome" id="R-HSA-8948700">
    <property type="pathway name" value="Competing endogenous RNAs (ceRNAs) regulate PTEN translation"/>
</dbReference>
<dbReference type="Reactome" id="R-HSA-8986944">
    <property type="pathway name" value="Transcriptional Regulation by MECP2"/>
</dbReference>
<dbReference type="Reactome" id="R-HSA-9018519">
    <property type="pathway name" value="Estrogen-dependent gene expression"/>
</dbReference>
<dbReference type="Reactome" id="R-HSA-9022692">
    <property type="pathway name" value="Regulation of MECP2 expression and activity"/>
</dbReference>
<dbReference type="Reactome" id="R-HSA-9029569">
    <property type="pathway name" value="NR1H3 &amp; NR1H2 regulate gene expression linked to cholesterol transport and efflux"/>
</dbReference>
<dbReference type="Reactome" id="R-HSA-9725371">
    <property type="pathway name" value="Nuclear events stimulated by ALK signaling in cancer"/>
</dbReference>
<dbReference type="Reactome" id="R-HSA-9759811">
    <property type="pathway name" value="Regulation of CDH11 mRNA translation by microRNAs"/>
</dbReference>
<dbReference type="Reactome" id="R-HSA-9768778">
    <property type="pathway name" value="Regulation of NPAS4 mRNA translation"/>
</dbReference>
<dbReference type="Reactome" id="R-HSA-9824594">
    <property type="pathway name" value="Regulation of MITF-M-dependent genes involved in apoptosis"/>
</dbReference>
<dbReference type="Reactome" id="R-HSA-9839394">
    <property type="pathway name" value="TGFBR3 expression"/>
</dbReference>
<dbReference type="SignaLink" id="Q9HCJ0"/>
<dbReference type="BioGRID-ORCS" id="57690">
    <property type="hits" value="19 hits in 1160 CRISPR screens"/>
</dbReference>
<dbReference type="CD-CODE" id="232F8A39">
    <property type="entry name" value="P-body"/>
</dbReference>
<dbReference type="CD-CODE" id="DEE660B4">
    <property type="entry name" value="Stress granule"/>
</dbReference>
<dbReference type="ChiTaRS" id="TNRC6C">
    <property type="organism name" value="human"/>
</dbReference>
<dbReference type="EvolutionaryTrace" id="Q9HCJ0"/>
<dbReference type="GenomeRNAi" id="57690"/>
<dbReference type="Pharos" id="Q9HCJ0">
    <property type="development level" value="Tbio"/>
</dbReference>
<dbReference type="PRO" id="PR:Q9HCJ0"/>
<dbReference type="Proteomes" id="UP000005640">
    <property type="component" value="Chromosome 17"/>
</dbReference>
<dbReference type="RNAct" id="Q9HCJ0">
    <property type="molecule type" value="protein"/>
</dbReference>
<dbReference type="Bgee" id="ENSG00000078687">
    <property type="expression patterns" value="Expressed in sural nerve and 175 other cell types or tissues"/>
</dbReference>
<dbReference type="ExpressionAtlas" id="Q9HCJ0">
    <property type="expression patterns" value="baseline and differential"/>
</dbReference>
<dbReference type="GO" id="GO:0005829">
    <property type="term" value="C:cytosol"/>
    <property type="evidence" value="ECO:0000304"/>
    <property type="project" value="Reactome"/>
</dbReference>
<dbReference type="GO" id="GO:0005654">
    <property type="term" value="C:nucleoplasm"/>
    <property type="evidence" value="ECO:0000318"/>
    <property type="project" value="GO_Central"/>
</dbReference>
<dbReference type="GO" id="GO:0000932">
    <property type="term" value="C:P-body"/>
    <property type="evidence" value="ECO:0000318"/>
    <property type="project" value="GO_Central"/>
</dbReference>
<dbReference type="GO" id="GO:0003723">
    <property type="term" value="F:RNA binding"/>
    <property type="evidence" value="ECO:0007669"/>
    <property type="project" value="UniProtKB-KW"/>
</dbReference>
<dbReference type="GO" id="GO:0035278">
    <property type="term" value="P:miRNA-mediated gene silencing by inhibition of translation"/>
    <property type="evidence" value="ECO:0000304"/>
    <property type="project" value="UniProtKB"/>
</dbReference>
<dbReference type="GO" id="GO:0035195">
    <property type="term" value="P:miRNA-mediated post-transcriptional gene silencing"/>
    <property type="evidence" value="ECO:0000316"/>
    <property type="project" value="BHF-UCL"/>
</dbReference>
<dbReference type="GO" id="GO:1900153">
    <property type="term" value="P:positive regulation of nuclear-transcribed mRNA catabolic process, deadenylation-dependent decay"/>
    <property type="evidence" value="ECO:0000314"/>
    <property type="project" value="UniProtKB"/>
</dbReference>
<dbReference type="GO" id="GO:0060213">
    <property type="term" value="P:positive regulation of nuclear-transcribed mRNA poly(A) tail shortening"/>
    <property type="evidence" value="ECO:0000314"/>
    <property type="project" value="UniProtKB"/>
</dbReference>
<dbReference type="CDD" id="cd12713">
    <property type="entry name" value="RRM_TNRC6C"/>
    <property type="match status" value="1"/>
</dbReference>
<dbReference type="CDD" id="cd14283">
    <property type="entry name" value="UBA_TNR6C"/>
    <property type="match status" value="1"/>
</dbReference>
<dbReference type="DisProt" id="DP01324"/>
<dbReference type="FunFam" id="3.30.70.330:FF:000011">
    <property type="entry name" value="trinucleotide repeat-containing gene 6A protein-like"/>
    <property type="match status" value="1"/>
</dbReference>
<dbReference type="FunFam" id="1.10.8.10:FF:000027">
    <property type="entry name" value="Trinucleotide repeat-containing gene 6C protein"/>
    <property type="match status" value="1"/>
</dbReference>
<dbReference type="Gene3D" id="3.30.70.330">
    <property type="match status" value="1"/>
</dbReference>
<dbReference type="Gene3D" id="1.10.8.10">
    <property type="entry name" value="DNA helicase RuvA subunit, C-terminal domain"/>
    <property type="match status" value="1"/>
</dbReference>
<dbReference type="IDEAL" id="IID00587"/>
<dbReference type="InterPro" id="IPR019486">
    <property type="entry name" value="Argonaute_hook_dom"/>
</dbReference>
<dbReference type="InterPro" id="IPR052068">
    <property type="entry name" value="GW182_domain"/>
</dbReference>
<dbReference type="InterPro" id="IPR026805">
    <property type="entry name" value="GW182_M_dom"/>
</dbReference>
<dbReference type="InterPro" id="IPR012677">
    <property type="entry name" value="Nucleotide-bd_a/b_plait_sf"/>
</dbReference>
<dbReference type="InterPro" id="IPR035979">
    <property type="entry name" value="RBD_domain_sf"/>
</dbReference>
<dbReference type="InterPro" id="IPR000504">
    <property type="entry name" value="RRM_dom"/>
</dbReference>
<dbReference type="InterPro" id="IPR041917">
    <property type="entry name" value="TNR6C_UBA"/>
</dbReference>
<dbReference type="InterPro" id="IPR032226">
    <property type="entry name" value="TNRC6_PABC-bd"/>
</dbReference>
<dbReference type="InterPro" id="IPR034927">
    <property type="entry name" value="TNRC6C_RRM"/>
</dbReference>
<dbReference type="InterPro" id="IPR015940">
    <property type="entry name" value="UBA"/>
</dbReference>
<dbReference type="InterPro" id="IPR009060">
    <property type="entry name" value="UBA-like_sf"/>
</dbReference>
<dbReference type="PANTHER" id="PTHR13020">
    <property type="entry name" value="TRINUCLEOTIDE REPEAT-CONTAINING GENE 6"/>
    <property type="match status" value="1"/>
</dbReference>
<dbReference type="PANTHER" id="PTHR13020:SF9">
    <property type="entry name" value="TRINUCLEOTIDE REPEAT-CONTAINING GENE 6C PROTEIN"/>
    <property type="match status" value="1"/>
</dbReference>
<dbReference type="Pfam" id="PF10427">
    <property type="entry name" value="Ago_hook"/>
    <property type="match status" value="1"/>
</dbReference>
<dbReference type="Pfam" id="PF12938">
    <property type="entry name" value="M_domain"/>
    <property type="match status" value="1"/>
</dbReference>
<dbReference type="Pfam" id="PF00076">
    <property type="entry name" value="RRM_1"/>
    <property type="match status" value="1"/>
</dbReference>
<dbReference type="Pfam" id="PF16608">
    <property type="entry name" value="TNRC6-PABC_bdg"/>
    <property type="match status" value="1"/>
</dbReference>
<dbReference type="Pfam" id="PF00627">
    <property type="entry name" value="UBA"/>
    <property type="match status" value="1"/>
</dbReference>
<dbReference type="SMART" id="SM00165">
    <property type="entry name" value="UBA"/>
    <property type="match status" value="1"/>
</dbReference>
<dbReference type="SUPFAM" id="SSF54928">
    <property type="entry name" value="RNA-binding domain, RBD"/>
    <property type="match status" value="1"/>
</dbReference>
<dbReference type="SUPFAM" id="SSF46934">
    <property type="entry name" value="UBA-like"/>
    <property type="match status" value="1"/>
</dbReference>
<dbReference type="PROSITE" id="PS50030">
    <property type="entry name" value="UBA"/>
    <property type="match status" value="1"/>
</dbReference>
<accession>Q9HCJ0</accession>
<accession>A0A8Q3SIH5</accession>
<accession>A0A8Q3SIS0</accession>
<accession>G3XAB8</accession>
<accession>Q86UE5</accession>
<accession>Q8N3D8</accession>
<accession>Q96MU9</accession>
<comment type="function">
    <text evidence="5 8 9 10">Plays a role in RNA-mediated gene silencing by micro-RNAs (miRNAs). Required for miRNA-dependent translational repression of complementary mRNAs by argonaute family proteins. As scaffoldng protein associates with argonaute proteins bound to partially complementary mRNAs and simultaneously can recruit CCR4-NOT and PAN deadenylase complexes.</text>
</comment>
<comment type="subunit">
    <text evidence="5 6 7 8 9 10">Interacts with one or more of the argonaute family proteins AGO1, AGO2, AGO3 and AGO4. Interacts with PABPC1 and EIF4G1. Interacts with CNOT1; the interaction is direct and mediates the association with the CCR4-NOT complex. Interacts with PAN3; the interaction mediates the association with the PAN complex.</text>
</comment>
<comment type="interaction">
    <interactant intactId="EBI-6507625">
        <id>Q9HCJ0</id>
    </interactant>
    <interactant intactId="EBI-527363">
        <id>Q9UL18</id>
        <label>AGO1</label>
    </interactant>
    <organismsDiffer>false</organismsDiffer>
    <experiments>3</experiments>
</comment>
<comment type="interaction">
    <interactant intactId="EBI-6507625">
        <id>Q9HCJ0</id>
    </interactant>
    <interactant intactId="EBI-528269">
        <id>Q9UKV8</id>
        <label>AGO2</label>
    </interactant>
    <organismsDiffer>false</organismsDiffer>
    <experiments>5</experiments>
</comment>
<comment type="interaction">
    <interactant intactId="EBI-6507625">
        <id>Q9HCJ0</id>
    </interactant>
    <interactant intactId="EBI-2269696">
        <id>Q9HCK5</id>
        <label>AGO4</label>
    </interactant>
    <organismsDiffer>false</organismsDiffer>
    <experiments>3</experiments>
</comment>
<comment type="interaction">
    <interactant intactId="EBI-6507625">
        <id>Q9HCJ0</id>
    </interactant>
    <interactant intactId="EBI-1222758">
        <id>A5YKK6</id>
        <label>CNOT1</label>
    </interactant>
    <organismsDiffer>false</organismsDiffer>
    <experiments>7</experiments>
</comment>
<comment type="interaction">
    <interactant intactId="EBI-6507625">
        <id>Q9HCJ0</id>
    </interactant>
    <interactant intactId="EBI-1054261">
        <id>Q9H9A5</id>
        <label>CNOT10</label>
    </interactant>
    <organismsDiffer>false</organismsDiffer>
    <experiments>4</experiments>
</comment>
<comment type="interaction">
    <interactant intactId="EBI-6507625">
        <id>Q9HCJ0</id>
    </interactant>
    <interactant intactId="EBI-743033">
        <id>Q9NZN8</id>
        <label>CNOT2</label>
    </interactant>
    <organismsDiffer>false</organismsDiffer>
    <experiments>4</experiments>
</comment>
<comment type="interaction">
    <interactant intactId="EBI-6507625">
        <id>Q9HCJ0</id>
    </interactant>
    <interactant intactId="EBI-743073">
        <id>O75175</id>
        <label>CNOT3</label>
    </interactant>
    <organismsDiffer>false</organismsDiffer>
    <experiments>4</experiments>
</comment>
<comment type="interaction">
    <interactant intactId="EBI-6507625">
        <id>Q9HCJ0</id>
    </interactant>
    <interactant intactId="EBI-2104530">
        <id>Q9ULM6</id>
        <label>CNOT6</label>
    </interactant>
    <organismsDiffer>false</organismsDiffer>
    <experiments>2</experiments>
</comment>
<comment type="interaction">
    <interactant intactId="EBI-6507625">
        <id>Q9HCJ0</id>
    </interactant>
    <interactant intactId="EBI-1046635">
        <id>Q96LI5</id>
        <label>CNOT6L</label>
    </interactant>
    <organismsDiffer>false</organismsDiffer>
    <experiments>2</experiments>
</comment>
<comment type="interaction">
    <interactant intactId="EBI-6507625">
        <id>Q9HCJ0</id>
    </interactant>
    <interactant intactId="EBI-2105113">
        <id>Q9UIV1</id>
        <label>CNOT7</label>
    </interactant>
    <organismsDiffer>false</organismsDiffer>
    <experiments>4</experiments>
</comment>
<comment type="interaction">
    <interactant intactId="EBI-6507625">
        <id>Q9HCJ0</id>
    </interactant>
    <interactant intactId="EBI-81531">
        <id>P11940</id>
        <label>PABPC1</label>
    </interactant>
    <organismsDiffer>false</organismsDiffer>
    <experiments>15</experiments>
</comment>
<comment type="interaction">
    <interactant intactId="EBI-6507625">
        <id>Q9HCJ0</id>
    </interactant>
    <interactant intactId="EBI-2513054">
        <id>Q58A45</id>
        <label>PAN3</label>
    </interactant>
    <organismsDiffer>false</organismsDiffer>
    <experiments>4</experiments>
</comment>
<comment type="interaction">
    <interactant intactId="EBI-6507625">
        <id>Q9HCJ0</id>
    </interactant>
    <interactant intactId="EBI-528299">
        <id>Q8CJG0</id>
        <label>Ago2</label>
    </interactant>
    <organismsDiffer>true</organismsDiffer>
    <experiments>3</experiments>
</comment>
<comment type="interaction">
    <interactant intactId="EBI-52312184">
        <id>Q9HCJ0-1</id>
    </interactant>
    <interactant intactId="EBI-1222758">
        <id>A5YKK6</id>
        <label>CNOT1</label>
    </interactant>
    <organismsDiffer>false</organismsDiffer>
    <experiments>9</experiments>
</comment>
<comment type="interaction">
    <interactant intactId="EBI-52312184">
        <id>Q9HCJ0-1</id>
    </interactant>
    <interactant intactId="EBI-81531">
        <id>P11940</id>
        <label>PABPC1</label>
    </interactant>
    <organismsDiffer>false</organismsDiffer>
    <experiments>7</experiments>
</comment>
<comment type="interaction">
    <interactant intactId="EBI-52312184">
        <id>Q9HCJ0-1</id>
    </interactant>
    <interactant intactId="EBI-1058976">
        <id>Q504Q3</id>
        <label>PAN2</label>
    </interactant>
    <organismsDiffer>false</organismsDiffer>
    <experiments>5</experiments>
</comment>
<comment type="interaction">
    <interactant intactId="EBI-52312184">
        <id>Q9HCJ0-1</id>
    </interactant>
    <interactant intactId="EBI-103658">
        <id>P21187</id>
        <label>pAbp</label>
    </interactant>
    <organismsDiffer>true</organismsDiffer>
    <experiments>5</experiments>
</comment>
<comment type="alternative products">
    <event type="alternative splicing"/>
    <event type="alternative initiation"/>
    <isoform>
        <id>Q9HCJ0-3</id>
        <name>3</name>
        <sequence type="displayed"/>
    </isoform>
    <isoform>
        <id>Q9HCJ0-1</id>
        <name>1</name>
        <sequence type="described" ref="VSP_062210 VSP_062211 VSP_062212"/>
    </isoform>
    <isoform>
        <id>Q9HCJ0-2</id>
        <name>2</name>
        <sequence type="described" ref="VSP_062210"/>
    </isoform>
    <isoform>
        <id>Q9HCJ0-4</id>
        <name>4</name>
        <sequence type="described" ref="VSP_062212"/>
    </isoform>
</comment>
<comment type="domain">
    <text>The silencing domain, also known as C-terminal effector domain (CED), can act in autonomous repression, including both translational inhibition and mRNA degradation.</text>
</comment>
<comment type="similarity">
    <text evidence="11">Belongs to the GW182 family.</text>
</comment>
<comment type="sequence caution" evidence="11">
    <conflict type="erroneous initiation">
        <sequence resource="EMBL-CDS" id="AAH45631"/>
    </conflict>
    <text>Truncated N-terminus.</text>
</comment>
<comment type="sequence caution" evidence="11">
    <conflict type="erroneous initiation">
        <sequence resource="EMBL-CDS" id="BAB13408"/>
    </conflict>
    <text>Extended N-terminus.</text>
</comment>
<comment type="sequence caution" evidence="11">
    <conflict type="erroneous initiation">
        <sequence resource="EMBL-CDS" id="BAB71179"/>
    </conflict>
    <text>Truncated N-terminus.</text>
</comment>
<comment type="sequence caution" evidence="11">
    <conflict type="erroneous initiation">
        <sequence resource="EMBL-CDS" id="CAD39090"/>
    </conflict>
    <text>Truncated N-terminus.</text>
</comment>
<proteinExistence type="evidence at protein level"/>
<name>TNR6C_HUMAN</name>
<organism>
    <name type="scientific">Homo sapiens</name>
    <name type="common">Human</name>
    <dbReference type="NCBI Taxonomy" id="9606"/>
    <lineage>
        <taxon>Eukaryota</taxon>
        <taxon>Metazoa</taxon>
        <taxon>Chordata</taxon>
        <taxon>Craniata</taxon>
        <taxon>Vertebrata</taxon>
        <taxon>Euteleostomi</taxon>
        <taxon>Mammalia</taxon>
        <taxon>Eutheria</taxon>
        <taxon>Euarchontoglires</taxon>
        <taxon>Primates</taxon>
        <taxon>Haplorrhini</taxon>
        <taxon>Catarrhini</taxon>
        <taxon>Hominidae</taxon>
        <taxon>Homo</taxon>
    </lineage>
</organism>
<feature type="chain" id="PRO_0000278526" description="Trinucleotide repeat-containing gene 6C protein">
    <location>
        <begin position="1"/>
        <end position="1936"/>
    </location>
</feature>
<feature type="domain" description="UBA" evidence="3">
    <location>
        <begin position="1140"/>
        <end position="1185"/>
    </location>
</feature>
<feature type="domain" description="RRM">
    <location>
        <begin position="1811"/>
        <end position="1878"/>
    </location>
</feature>
<feature type="region of interest" description="Disordered" evidence="4">
    <location>
        <begin position="1"/>
        <end position="160"/>
    </location>
</feature>
<feature type="region of interest" description="Disordered" evidence="4">
    <location>
        <begin position="181"/>
        <end position="256"/>
    </location>
</feature>
<feature type="region of interest" description="Sufficient for interaction with argonaute family proteins">
    <location>
        <begin position="211"/>
        <end position="1133"/>
    </location>
</feature>
<feature type="region of interest" description="Disordered" evidence="4">
    <location>
        <begin position="366"/>
        <end position="412"/>
    </location>
</feature>
<feature type="region of interest" description="Disordered" evidence="4">
    <location>
        <begin position="439"/>
        <end position="931"/>
    </location>
</feature>
<feature type="region of interest" description="Disordered" evidence="4">
    <location>
        <begin position="961"/>
        <end position="1063"/>
    </location>
</feature>
<feature type="region of interest" description="Disordered" evidence="4">
    <location>
        <begin position="1115"/>
        <end position="1139"/>
    </location>
</feature>
<feature type="region of interest" description="Disordered" evidence="4">
    <location>
        <begin position="1291"/>
        <end position="1312"/>
    </location>
</feature>
<feature type="region of interest" description="Disordered" evidence="4">
    <location>
        <begin position="1419"/>
        <end position="1658"/>
    </location>
</feature>
<feature type="region of interest" description="Silencing domain; interaction with CNOT1 and PAN3" evidence="8">
    <location>
        <begin position="1467"/>
        <end position="1936"/>
    </location>
</feature>
<feature type="region of interest" description="Sufficient for translational repression when tethered to a target mRNA">
    <location>
        <begin position="1578"/>
        <end position="1936"/>
    </location>
</feature>
<feature type="region of interest" description="Required for interaction with PABPC1">
    <location>
        <begin position="1578"/>
        <end position="1624"/>
    </location>
</feature>
<feature type="region of interest" description="PABPC1-interacting motif-2 (PAM2)">
    <location>
        <begin position="1588"/>
        <end position="1606"/>
    </location>
</feature>
<feature type="region of interest" description="Disordered" evidence="4">
    <location>
        <begin position="1689"/>
        <end position="1732"/>
    </location>
</feature>
<feature type="region of interest" description="Interaction with the CCR4-NOT complex">
    <location>
        <begin position="1842"/>
        <end position="1936"/>
    </location>
</feature>
<feature type="region of interest" description="Disordered" evidence="4">
    <location>
        <begin position="1848"/>
        <end position="1869"/>
    </location>
</feature>
<feature type="coiled-coil region" evidence="2">
    <location>
        <begin position="1388"/>
        <end position="1419"/>
    </location>
</feature>
<feature type="compositionally biased region" description="Basic and acidic residues" evidence="4">
    <location>
        <begin position="1"/>
        <end position="31"/>
    </location>
</feature>
<feature type="compositionally biased region" description="Polar residues" evidence="4">
    <location>
        <begin position="34"/>
        <end position="44"/>
    </location>
</feature>
<feature type="compositionally biased region" description="Low complexity" evidence="4">
    <location>
        <begin position="45"/>
        <end position="57"/>
    </location>
</feature>
<feature type="compositionally biased region" description="Polar residues" evidence="4">
    <location>
        <begin position="58"/>
        <end position="71"/>
    </location>
</feature>
<feature type="compositionally biased region" description="Basic and acidic residues" evidence="4">
    <location>
        <begin position="76"/>
        <end position="88"/>
    </location>
</feature>
<feature type="compositionally biased region" description="Polar residues" evidence="4">
    <location>
        <begin position="100"/>
        <end position="111"/>
    </location>
</feature>
<feature type="compositionally biased region" description="Polar residues" evidence="4">
    <location>
        <begin position="183"/>
        <end position="217"/>
    </location>
</feature>
<feature type="compositionally biased region" description="Low complexity" evidence="4">
    <location>
        <begin position="218"/>
        <end position="235"/>
    </location>
</feature>
<feature type="compositionally biased region" description="Polar residues" evidence="4">
    <location>
        <begin position="366"/>
        <end position="393"/>
    </location>
</feature>
<feature type="compositionally biased region" description="Low complexity" evidence="4">
    <location>
        <begin position="394"/>
        <end position="408"/>
    </location>
</feature>
<feature type="compositionally biased region" description="Low complexity" evidence="4">
    <location>
        <begin position="439"/>
        <end position="453"/>
    </location>
</feature>
<feature type="compositionally biased region" description="Low complexity" evidence="4">
    <location>
        <begin position="469"/>
        <end position="480"/>
    </location>
</feature>
<feature type="compositionally biased region" description="Polar residues" evidence="4">
    <location>
        <begin position="481"/>
        <end position="498"/>
    </location>
</feature>
<feature type="compositionally biased region" description="Polar residues" evidence="4">
    <location>
        <begin position="572"/>
        <end position="585"/>
    </location>
</feature>
<feature type="compositionally biased region" description="Low complexity" evidence="4">
    <location>
        <begin position="594"/>
        <end position="614"/>
    </location>
</feature>
<feature type="compositionally biased region" description="Basic and acidic residues" evidence="4">
    <location>
        <begin position="625"/>
        <end position="636"/>
    </location>
</feature>
<feature type="compositionally biased region" description="Polar residues" evidence="4">
    <location>
        <begin position="654"/>
        <end position="669"/>
    </location>
</feature>
<feature type="compositionally biased region" description="Basic and acidic residues" evidence="4">
    <location>
        <begin position="674"/>
        <end position="684"/>
    </location>
</feature>
<feature type="compositionally biased region" description="Polar residues" evidence="4">
    <location>
        <begin position="694"/>
        <end position="718"/>
    </location>
</feature>
<feature type="compositionally biased region" description="Low complexity" evidence="4">
    <location>
        <begin position="720"/>
        <end position="730"/>
    </location>
</feature>
<feature type="compositionally biased region" description="Low complexity" evidence="4">
    <location>
        <begin position="750"/>
        <end position="772"/>
    </location>
</feature>
<feature type="compositionally biased region" description="Polar residues" evidence="4">
    <location>
        <begin position="834"/>
        <end position="866"/>
    </location>
</feature>
<feature type="compositionally biased region" description="Polar residues" evidence="4">
    <location>
        <begin position="873"/>
        <end position="888"/>
    </location>
</feature>
<feature type="compositionally biased region" description="Low complexity" evidence="4">
    <location>
        <begin position="964"/>
        <end position="982"/>
    </location>
</feature>
<feature type="compositionally biased region" description="Polar residues" evidence="4">
    <location>
        <begin position="1021"/>
        <end position="1035"/>
    </location>
</feature>
<feature type="compositionally biased region" description="Pro residues" evidence="4">
    <location>
        <begin position="1421"/>
        <end position="1430"/>
    </location>
</feature>
<feature type="compositionally biased region" description="Polar residues" evidence="4">
    <location>
        <begin position="1496"/>
        <end position="1515"/>
    </location>
</feature>
<feature type="compositionally biased region" description="Polar residues" evidence="4">
    <location>
        <begin position="1623"/>
        <end position="1633"/>
    </location>
</feature>
<feature type="compositionally biased region" description="Low complexity" evidence="4">
    <location>
        <begin position="1641"/>
        <end position="1658"/>
    </location>
</feature>
<feature type="compositionally biased region" description="Polar residues" evidence="4">
    <location>
        <begin position="1689"/>
        <end position="1703"/>
    </location>
</feature>
<feature type="compositionally biased region" description="Low complexity" evidence="4">
    <location>
        <begin position="1848"/>
        <end position="1865"/>
    </location>
</feature>
<feature type="modified residue" description="Omega-N-methylarginine" evidence="14">
    <location>
        <position position="523"/>
    </location>
</feature>
<feature type="modified residue" description="Phosphoserine" evidence="1">
    <location>
        <position position="675"/>
    </location>
</feature>
<feature type="modified residue" description="Phosphoserine" evidence="12 13">
    <location>
        <position position="924"/>
    </location>
</feature>
<feature type="modified residue" description="Phosphothreonine" evidence="15">
    <location>
        <position position="987"/>
    </location>
</feature>
<feature type="modified residue" description="Phosphoserine" evidence="13">
    <location>
        <position position="1218"/>
    </location>
</feature>
<feature type="splice variant" id="VSP_062210" description="In isoform 1 and isoform 2.">
    <location>
        <begin position="1"/>
        <end position="210"/>
    </location>
</feature>
<feature type="splice variant" id="VSP_062211" description="In isoform 1.">
    <original>P</original>
    <variation>PGRK</variation>
    <location>
        <position position="1005"/>
    </location>
</feature>
<feature type="splice variant" id="VSP_062212" description="In isoform 1 and isoform 4.">
    <location>
        <begin position="1644"/>
        <end position="1682"/>
    </location>
</feature>
<feature type="sequence variant" id="VAR_052237" description="In dbSNP:rs34293811.">
    <original>P</original>
    <variation>R</variation>
    <location>
        <position position="1027"/>
    </location>
</feature>
<feature type="mutagenesis site" description="Abolishes association with CCR4-NOT complex.">
    <original>QSRLPQW</original>
    <variation>AAAAPAA</variation>
    <location>
        <begin position="1501"/>
        <end position="1507"/>
    </location>
</feature>
<feature type="mutagenesis site" description="Abolishes interaction with PABPC1, impairs interaction with PAN2, no effect on interaction with CCR4-NOT complex, reduces RNA deadenylation rate; when associated with 1395-A-A-1603.">
    <original>EF</original>
    <variation>AA</variation>
    <location>
        <begin position="1595"/>
        <end position="1596"/>
    </location>
</feature>
<feature type="mutagenesis site" description="Abolishes interaction with PABPC1, impairs interaction with PAN2, no effect on interaction with CCR4-NOT complex, reduces RNA deadenylation rate; when associated with 1388-A-A-1596.">
    <original>WK</original>
    <variation>AA</variation>
    <location>
        <begin position="1602"/>
        <end position="1603"/>
    </location>
</feature>
<feature type="mutagenesis site" description="Abolishes translational repression when tethered to a target mRNA, abolishes association with the CCR4-NOT complex; when associated with A-1733, A-1740, A-1750, A-1761, A-1851 and A-1894." evidence="9">
    <original>W</original>
    <variation>A</variation>
    <location>
        <position position="1691"/>
    </location>
</feature>
<feature type="mutagenesis site" description="Abolishes translational repression when tethered to a target mRNA, abolishes association with the CCR4-NOT complex; when associated with A-1691, A-1740, A-1750, A-1761, A-1851 and A-1894." evidence="9">
    <original>W</original>
    <variation>A</variation>
    <location>
        <position position="1733"/>
    </location>
</feature>
<feature type="mutagenesis site" description="Abolishes translational repression when tethered to a target mRNA, abolishes association with the CCR4-NOT complex; when associated with A-1691, A-1733, A-1750, A-1761, A-1851 and A-1894." evidence="9">
    <original>W</original>
    <variation>A</variation>
    <location>
        <position position="1740"/>
    </location>
</feature>
<feature type="mutagenesis site" description="Abolishes translational repression when tethered to a target mRNA, abolishes association with the CCR4-NOT complex; when associated with A-1691, A-1733, A-1740, A-1761, A-1851 and A-1894." evidence="9">
    <original>W</original>
    <variation>A</variation>
    <location>
        <position position="1750"/>
    </location>
</feature>
<feature type="mutagenesis site" description="Abolishes translational repression when tethered to a target mRNA, abolishes association with the CCR4-NOT complex; when associated with A-1691, A-1733, A-1740, A-1750, A-1851 and A-1894." evidence="9">
    <original>W</original>
    <variation>A</variation>
    <location>
        <position position="1761"/>
    </location>
</feature>
<feature type="mutagenesis site" description="Strongly reduced ability to repress translation of target mRNAs." evidence="5">
    <original>H</original>
    <variation>A</variation>
    <location>
        <position position="1783"/>
    </location>
</feature>
<feature type="mutagenesis site" description="Weakly reduced ability to repress translation of target mRNAs." evidence="5">
    <original>F</original>
    <variation>A</variation>
    <location>
        <position position="1789"/>
    </location>
</feature>
<feature type="mutagenesis site" description="Strongly reduced ability to repress translation of target mRNAs." evidence="5">
    <original>Y</original>
    <variation>A</variation>
    <location>
        <position position="1802"/>
    </location>
</feature>
<feature type="mutagenesis site" description="Abolishes translational repression when tethered to a target mRNA, abolishes association with the CCR4-NOT complex; when associated with A-1691, A-1733, A-1740, A-1750, A-1761 and A-1894." evidence="9">
    <original>W</original>
    <variation>A</variation>
    <location>
        <position position="1851"/>
    </location>
</feature>
<feature type="mutagenesis site" description="Impairs interaction with the CCR4-NOT complex, no effect on interaction with PABPC1; when associated with 1658-A-A-1906.">
    <original>LWG</original>
    <variation>AAA</variation>
    <location>
        <begin position="1893"/>
        <end position="1895"/>
    </location>
</feature>
<feature type="mutagenesis site" description="Abolishes translational repression when tethered to a target mRNA, abolishes association with the CCR4-NOT complex; when associated with A-1691, A-1733, A-1740, A-1750, A-1761 and A-1851." evidence="9">
    <original>W</original>
    <variation>A</variation>
    <location>
        <position position="1894"/>
    </location>
</feature>
<feature type="mutagenesis site" description="Impairs interaction with the CCR4-NOT complex, no effect on interaction with PABPC1; when associated with 1647-A-A-1895.">
    <original>LWG</original>
    <variation>AAA</variation>
    <location>
        <begin position="1904"/>
        <end position="1906"/>
    </location>
</feature>
<feature type="sequence conflict" description="In Ref. 6; AAH45631." evidence="11" ref="6">
    <original>G</original>
    <variation>C</variation>
    <location>
        <position position="1438"/>
    </location>
</feature>
<feature type="sequence conflict" description="In Ref. 6; AAH45631." evidence="11" ref="6">
    <original>R</original>
    <variation>P</variation>
    <location>
        <position position="1801"/>
    </location>
</feature>
<feature type="helix" evidence="16">
    <location>
        <begin position="1143"/>
        <end position="1157"/>
    </location>
</feature>
<feature type="helix" evidence="16">
    <location>
        <begin position="1161"/>
        <end position="1170"/>
    </location>
</feature>
<feature type="helix" evidence="16">
    <location>
        <begin position="1175"/>
        <end position="1183"/>
    </location>
</feature>
<feature type="turn" evidence="17">
    <location>
        <begin position="1722"/>
        <end position="1724"/>
    </location>
</feature>